<accession>Q5M6H0</accession>
<gene>
    <name evidence="1" type="primary">polC</name>
    <name type="ordered locus">stu0062</name>
</gene>
<evidence type="ECO:0000255" key="1">
    <source>
        <dbReference type="HAMAP-Rule" id="MF_00356"/>
    </source>
</evidence>
<dbReference type="EC" id="2.7.7.7" evidence="1"/>
<dbReference type="EMBL" id="CP000023">
    <property type="protein sequence ID" value="AAV59791.1"/>
    <property type="molecule type" value="Genomic_DNA"/>
</dbReference>
<dbReference type="RefSeq" id="WP_011225286.1">
    <property type="nucleotide sequence ID" value="NC_006448.1"/>
</dbReference>
<dbReference type="SMR" id="Q5M6H0"/>
<dbReference type="STRING" id="264199.stu0062"/>
<dbReference type="KEGG" id="stl:stu0062"/>
<dbReference type="PATRIC" id="fig|264199.4.peg.64"/>
<dbReference type="eggNOG" id="COG2176">
    <property type="taxonomic scope" value="Bacteria"/>
</dbReference>
<dbReference type="HOGENOM" id="CLU_003297_2_0_9"/>
<dbReference type="Proteomes" id="UP000001170">
    <property type="component" value="Chromosome"/>
</dbReference>
<dbReference type="GO" id="GO:0005737">
    <property type="term" value="C:cytoplasm"/>
    <property type="evidence" value="ECO:0007669"/>
    <property type="project" value="UniProtKB-SubCell"/>
</dbReference>
<dbReference type="GO" id="GO:0008408">
    <property type="term" value="F:3'-5' exonuclease activity"/>
    <property type="evidence" value="ECO:0007669"/>
    <property type="project" value="UniProtKB-UniRule"/>
</dbReference>
<dbReference type="GO" id="GO:0003677">
    <property type="term" value="F:DNA binding"/>
    <property type="evidence" value="ECO:0007669"/>
    <property type="project" value="UniProtKB-UniRule"/>
</dbReference>
<dbReference type="GO" id="GO:0003887">
    <property type="term" value="F:DNA-directed DNA polymerase activity"/>
    <property type="evidence" value="ECO:0007669"/>
    <property type="project" value="UniProtKB-UniRule"/>
</dbReference>
<dbReference type="GO" id="GO:0006261">
    <property type="term" value="P:DNA-templated DNA replication"/>
    <property type="evidence" value="ECO:0007669"/>
    <property type="project" value="UniProtKB-UniRule"/>
</dbReference>
<dbReference type="CDD" id="cd06127">
    <property type="entry name" value="DEDDh"/>
    <property type="match status" value="1"/>
</dbReference>
<dbReference type="CDD" id="cd07435">
    <property type="entry name" value="PHP_PolIIIA_POLC"/>
    <property type="match status" value="1"/>
</dbReference>
<dbReference type="CDD" id="cd04484">
    <property type="entry name" value="polC_OBF"/>
    <property type="match status" value="1"/>
</dbReference>
<dbReference type="FunFam" id="3.30.420.10:FF:000045">
    <property type="entry name" value="3'-5' exonuclease DinG"/>
    <property type="match status" value="1"/>
</dbReference>
<dbReference type="Gene3D" id="1.10.150.870">
    <property type="match status" value="1"/>
</dbReference>
<dbReference type="Gene3D" id="3.30.1900.20">
    <property type="match status" value="1"/>
</dbReference>
<dbReference type="Gene3D" id="6.10.140.1510">
    <property type="match status" value="1"/>
</dbReference>
<dbReference type="Gene3D" id="3.20.20.140">
    <property type="entry name" value="Metal-dependent hydrolases"/>
    <property type="match status" value="2"/>
</dbReference>
<dbReference type="Gene3D" id="2.40.50.140">
    <property type="entry name" value="Nucleic acid-binding proteins"/>
    <property type="match status" value="1"/>
</dbReference>
<dbReference type="Gene3D" id="1.10.150.700">
    <property type="entry name" value="PolC, middle finger domain"/>
    <property type="match status" value="1"/>
</dbReference>
<dbReference type="Gene3D" id="3.30.420.10">
    <property type="entry name" value="Ribonuclease H-like superfamily/Ribonuclease H"/>
    <property type="match status" value="1"/>
</dbReference>
<dbReference type="HAMAP" id="MF_00356">
    <property type="entry name" value="DNApol_PolC"/>
    <property type="match status" value="1"/>
</dbReference>
<dbReference type="InterPro" id="IPR011708">
    <property type="entry name" value="DNA_pol3_alpha_NTPase_dom"/>
</dbReference>
<dbReference type="InterPro" id="IPR040982">
    <property type="entry name" value="DNA_pol3_finger"/>
</dbReference>
<dbReference type="InterPro" id="IPR024754">
    <property type="entry name" value="DNA_PolC-like_N_II"/>
</dbReference>
<dbReference type="InterPro" id="IPR028112">
    <property type="entry name" value="DNA_PolC-type_N_I"/>
</dbReference>
<dbReference type="InterPro" id="IPR004805">
    <property type="entry name" value="DnaE2/DnaE/PolC"/>
</dbReference>
<dbReference type="InterPro" id="IPR029460">
    <property type="entry name" value="DNAPol_HHH"/>
</dbReference>
<dbReference type="InterPro" id="IPR006054">
    <property type="entry name" value="DnaQ"/>
</dbReference>
<dbReference type="InterPro" id="IPR013520">
    <property type="entry name" value="Exonuclease_RNaseT/DNA_pol3"/>
</dbReference>
<dbReference type="InterPro" id="IPR012340">
    <property type="entry name" value="NA-bd_OB-fold"/>
</dbReference>
<dbReference type="InterPro" id="IPR004013">
    <property type="entry name" value="PHP_dom"/>
</dbReference>
<dbReference type="InterPro" id="IPR003141">
    <property type="entry name" value="Pol/His_phosphatase_N"/>
</dbReference>
<dbReference type="InterPro" id="IPR006308">
    <property type="entry name" value="Pol_III_a_PolC-type_gram_pos"/>
</dbReference>
<dbReference type="InterPro" id="IPR044923">
    <property type="entry name" value="PolC_middle_finger_sf"/>
</dbReference>
<dbReference type="InterPro" id="IPR012337">
    <property type="entry name" value="RNaseH-like_sf"/>
</dbReference>
<dbReference type="InterPro" id="IPR036397">
    <property type="entry name" value="RNaseH_sf"/>
</dbReference>
<dbReference type="NCBIfam" id="TIGR00573">
    <property type="entry name" value="dnaq"/>
    <property type="match status" value="1"/>
</dbReference>
<dbReference type="NCBIfam" id="TIGR01405">
    <property type="entry name" value="polC_Gram_pos"/>
    <property type="match status" value="1"/>
</dbReference>
<dbReference type="NCBIfam" id="NF001688">
    <property type="entry name" value="PRK00448.1"/>
    <property type="match status" value="1"/>
</dbReference>
<dbReference type="PANTHER" id="PTHR32294:SF5">
    <property type="entry name" value="DNA POLYMERASE III POLC-TYPE"/>
    <property type="match status" value="1"/>
</dbReference>
<dbReference type="PANTHER" id="PTHR32294">
    <property type="entry name" value="DNA POLYMERASE III SUBUNIT ALPHA"/>
    <property type="match status" value="1"/>
</dbReference>
<dbReference type="Pfam" id="PF14480">
    <property type="entry name" value="DNA_pol3_a_NI"/>
    <property type="match status" value="1"/>
</dbReference>
<dbReference type="Pfam" id="PF11490">
    <property type="entry name" value="DNA_pol3_a_NII"/>
    <property type="match status" value="1"/>
</dbReference>
<dbReference type="Pfam" id="PF07733">
    <property type="entry name" value="DNA_pol3_alpha"/>
    <property type="match status" value="1"/>
</dbReference>
<dbReference type="Pfam" id="PF17657">
    <property type="entry name" value="DNA_pol3_finger"/>
    <property type="match status" value="1"/>
</dbReference>
<dbReference type="Pfam" id="PF14579">
    <property type="entry name" value="HHH_6"/>
    <property type="match status" value="1"/>
</dbReference>
<dbReference type="Pfam" id="PF02811">
    <property type="entry name" value="PHP"/>
    <property type="match status" value="1"/>
</dbReference>
<dbReference type="Pfam" id="PF00929">
    <property type="entry name" value="RNase_T"/>
    <property type="match status" value="1"/>
</dbReference>
<dbReference type="SMART" id="SM00479">
    <property type="entry name" value="EXOIII"/>
    <property type="match status" value="1"/>
</dbReference>
<dbReference type="SMART" id="SM00481">
    <property type="entry name" value="POLIIIAc"/>
    <property type="match status" value="1"/>
</dbReference>
<dbReference type="SUPFAM" id="SSF50249">
    <property type="entry name" value="Nucleic acid-binding proteins"/>
    <property type="match status" value="1"/>
</dbReference>
<dbReference type="SUPFAM" id="SSF53098">
    <property type="entry name" value="Ribonuclease H-like"/>
    <property type="match status" value="1"/>
</dbReference>
<keyword id="KW-0963">Cytoplasm</keyword>
<keyword id="KW-0235">DNA replication</keyword>
<keyword id="KW-0239">DNA-directed DNA polymerase</keyword>
<keyword id="KW-0269">Exonuclease</keyword>
<keyword id="KW-0378">Hydrolase</keyword>
<keyword id="KW-0540">Nuclease</keyword>
<keyword id="KW-0548">Nucleotidyltransferase</keyword>
<keyword id="KW-1185">Reference proteome</keyword>
<keyword id="KW-0808">Transferase</keyword>
<comment type="function">
    <text evidence="1">Required for replicative DNA synthesis. This DNA polymerase also exhibits 3' to 5' exonuclease activity.</text>
</comment>
<comment type="catalytic activity">
    <reaction evidence="1">
        <text>DNA(n) + a 2'-deoxyribonucleoside 5'-triphosphate = DNA(n+1) + diphosphate</text>
        <dbReference type="Rhea" id="RHEA:22508"/>
        <dbReference type="Rhea" id="RHEA-COMP:17339"/>
        <dbReference type="Rhea" id="RHEA-COMP:17340"/>
        <dbReference type="ChEBI" id="CHEBI:33019"/>
        <dbReference type="ChEBI" id="CHEBI:61560"/>
        <dbReference type="ChEBI" id="CHEBI:173112"/>
        <dbReference type="EC" id="2.7.7.7"/>
    </reaction>
</comment>
<comment type="subcellular location">
    <subcellularLocation>
        <location evidence="1">Cytoplasm</location>
    </subcellularLocation>
</comment>
<comment type="similarity">
    <text evidence="1">Belongs to the DNA polymerase type-C family. PolC subfamily.</text>
</comment>
<organism>
    <name type="scientific">Streptococcus thermophilus (strain ATCC BAA-250 / LMG 18311)</name>
    <dbReference type="NCBI Taxonomy" id="264199"/>
    <lineage>
        <taxon>Bacteria</taxon>
        <taxon>Bacillati</taxon>
        <taxon>Bacillota</taxon>
        <taxon>Bacilli</taxon>
        <taxon>Lactobacillales</taxon>
        <taxon>Streptococcaceae</taxon>
        <taxon>Streptococcus</taxon>
    </lineage>
</organism>
<proteinExistence type="inferred from homology"/>
<reference key="1">
    <citation type="journal article" date="2004" name="Nat. Biotechnol.">
        <title>Complete sequence and comparative genome analysis of the dairy bacterium Streptococcus thermophilus.</title>
        <authorList>
            <person name="Bolotin A."/>
            <person name="Quinquis B."/>
            <person name="Renault P."/>
            <person name="Sorokin A."/>
            <person name="Ehrlich S.D."/>
            <person name="Kulakauskas S."/>
            <person name="Lapidus A."/>
            <person name="Goltsman E."/>
            <person name="Mazur M."/>
            <person name="Pusch G.D."/>
            <person name="Fonstein M."/>
            <person name="Overbeek R."/>
            <person name="Kyprides N."/>
            <person name="Purnelle B."/>
            <person name="Prozzi D."/>
            <person name="Ngui K."/>
            <person name="Masuy D."/>
            <person name="Hancy F."/>
            <person name="Burteau S."/>
            <person name="Boutry M."/>
            <person name="Delcour J."/>
            <person name="Goffeau A."/>
            <person name="Hols P."/>
        </authorList>
    </citation>
    <scope>NUCLEOTIDE SEQUENCE [LARGE SCALE GENOMIC DNA]</scope>
    <source>
        <strain>ATCC BAA-250 / LMG 18311</strain>
    </source>
</reference>
<sequence length="1464" mass="164844">MSDKFKLLLKQIHFPQHEEAYNEIKSGSIESVKLFKSKRQWFFVFSFRNLLSYETFTLFDNLLHSSFDSLGAKVSYMINVEDISCDQSLLEAYFSYALDILKSSHFSIYSLFSNLGIEISNNSISVKAPAHILRENLHERFIALIADVLSNVGLSNVSISVLEDKEASSSLEEAYETNKISLQEEAESQARQALQSIVQSSPVPPPQKHQAQNFAEKQSQRVASFDKAEITPMIEVNSEENRIVFEGYIFDVEQRETKTGRIIINFKVTDYTSSFAMQRWVKDSEELVKFGMIKKGNWVRVRGRIENNPFTHSLTMNVQDIKEISHTPRKDLMPEGQKRVEFHAHTNMSTMDAIPTVEELIDTAAFWGHPAVAITDHANVQSFPHGYHKAKKAGIKAIFGLEANLVEDKVPIVYNSENLELKEATYVVFDVETTGLSAVHNDLIQIAASKMHKGNIVEQFDEFIDPGYPLSAFTTELTGITDNHVKGAKPLVQVLQEFQEFCKGAVLVAHNATFDVGFMNANYERHQLPTISQPVIDTLEFARNLYPEYKRHGLGPLTKRFGVALDHHHMANYDAEATGRLLFIFIKDVFEKHGLTNLEQLNTELVSDDSYKKSRVKHATLYVQNQTGLKNIFKLVSLSNVSYFEGVARIPRKVLDEYREGIIVGSACADGEVFDTLLSHGIDKAVEVAKYYDFIEVMPPAIYAPLIAKDLIKDEEAIEQLIRDLIEVANRLDKPVLATGNVHYINPEDAIYREIIVRALGQGAMINRPIGKGENAQPAPLPEAHFRTTNEMLDEFAFLGKDLAYEIVVANTQAMANQIEEVEVVKKDLYTPYIDRAEEQVAEMTYAKAFELYGNPLPDIIDLRIEKELSSILGNGFAVIYLASQMLVNRSNERGYLVGSRGSVGSSFVATMIGITEVNPMPPHYLCPKCQHSEFITDGSYGSGFDLPDKECSECGTEYKKDGQDIPFETFLGFDGDKVPDIDLNFSGDDQPSAHLDVRDIFGEQYAFRAGTVGTVADRTAYGFVKGYERDYNKFYRDAEVDRLAMGVAGVKRNTGQHPGGIVVIPNYMDVYDFTPVQYPADDVTAAWQTTHFNFHDIDENVLKLDILGHDDPTMIRKLQDLSGIDPKDIRADDPDVMKLFSGTEVLGVTPEQIGTSTGVLGIPEFGTNFVRGMVEETHPTTFAELLQLSGLSHGTDVWLGNAQDLIKEGIATLKTVIGCRDDIMVYLMHAGLDPKMAFTIMERVRKGMWLKISEEERNGYIQAMRENNVPDWYIESCGKIKYMFPKAHAAAYVMMALRVAYFKVHHPIYYYCAYFSIRAKAFELKTMSAGLDAVKARMEDIKEKRQRNEATNLENDLFTTLEIVNEMLERGFTFGQLDLYKSQATEFLIEGDTLIPPFIALEGLGENVAKQLVAAREEGEFLSKTELRKRGGLSSTLVERLDEMGILGNMPEDNQLSLFDDFF</sequence>
<protein>
    <recommendedName>
        <fullName evidence="1">DNA polymerase III PolC-type</fullName>
        <shortName evidence="1">PolIII</shortName>
        <ecNumber evidence="1">2.7.7.7</ecNumber>
    </recommendedName>
</protein>
<name>DPO3_STRT2</name>
<feature type="chain" id="PRO_1000048494" description="DNA polymerase III PolC-type">
    <location>
        <begin position="1"/>
        <end position="1464"/>
    </location>
</feature>
<feature type="domain" description="Exonuclease">
    <location>
        <begin position="426"/>
        <end position="582"/>
    </location>
</feature>